<feature type="chain" id="PRO_1000135048" description="Imidazole glycerol phosphate synthase subunit HisF">
    <location>
        <begin position="1"/>
        <end position="258"/>
    </location>
</feature>
<feature type="active site" evidence="1">
    <location>
        <position position="11"/>
    </location>
</feature>
<feature type="active site" evidence="1">
    <location>
        <position position="130"/>
    </location>
</feature>
<comment type="function">
    <text evidence="1">IGPS catalyzes the conversion of PRFAR and glutamine to IGP, AICAR and glutamate. The HisF subunit catalyzes the cyclization activity that produces IGP and AICAR from PRFAR using the ammonia provided by the HisH subunit.</text>
</comment>
<comment type="catalytic activity">
    <reaction evidence="1">
        <text>5-[(5-phospho-1-deoxy-D-ribulos-1-ylimino)methylamino]-1-(5-phospho-beta-D-ribosyl)imidazole-4-carboxamide + L-glutamine = D-erythro-1-(imidazol-4-yl)glycerol 3-phosphate + 5-amino-1-(5-phospho-beta-D-ribosyl)imidazole-4-carboxamide + L-glutamate + H(+)</text>
        <dbReference type="Rhea" id="RHEA:24793"/>
        <dbReference type="ChEBI" id="CHEBI:15378"/>
        <dbReference type="ChEBI" id="CHEBI:29985"/>
        <dbReference type="ChEBI" id="CHEBI:58278"/>
        <dbReference type="ChEBI" id="CHEBI:58359"/>
        <dbReference type="ChEBI" id="CHEBI:58475"/>
        <dbReference type="ChEBI" id="CHEBI:58525"/>
        <dbReference type="EC" id="4.3.2.10"/>
    </reaction>
</comment>
<comment type="pathway">
    <text evidence="1">Amino-acid biosynthesis; L-histidine biosynthesis; L-histidine from 5-phospho-alpha-D-ribose 1-diphosphate: step 5/9.</text>
</comment>
<comment type="subunit">
    <text evidence="1">Heterodimer of HisH and HisF.</text>
</comment>
<comment type="subcellular location">
    <subcellularLocation>
        <location evidence="1">Cytoplasm</location>
    </subcellularLocation>
</comment>
<comment type="similarity">
    <text evidence="1">Belongs to the HisA/HisF family.</text>
</comment>
<accession>B2TYF5</accession>
<proteinExistence type="inferred from homology"/>
<protein>
    <recommendedName>
        <fullName evidence="1">Imidazole glycerol phosphate synthase subunit HisF</fullName>
        <ecNumber evidence="1">4.3.2.10</ecNumber>
    </recommendedName>
    <alternativeName>
        <fullName evidence="1">IGP synthase cyclase subunit</fullName>
    </alternativeName>
    <alternativeName>
        <fullName evidence="1">IGP synthase subunit HisF</fullName>
    </alternativeName>
    <alternativeName>
        <fullName evidence="1">ImGP synthase subunit HisF</fullName>
        <shortName evidence="1">IGPS subunit HisF</shortName>
    </alternativeName>
</protein>
<dbReference type="EC" id="4.3.2.10" evidence="1"/>
<dbReference type="EMBL" id="CP001063">
    <property type="protein sequence ID" value="ACD07883.1"/>
    <property type="molecule type" value="Genomic_DNA"/>
</dbReference>
<dbReference type="RefSeq" id="WP_000880161.1">
    <property type="nucleotide sequence ID" value="NC_010658.1"/>
</dbReference>
<dbReference type="SMR" id="B2TYF5"/>
<dbReference type="STRING" id="344609.SbBS512_E1207"/>
<dbReference type="KEGG" id="sbc:SbBS512_E1207"/>
<dbReference type="HOGENOM" id="CLU_048577_4_0_6"/>
<dbReference type="UniPathway" id="UPA00031">
    <property type="reaction ID" value="UER00010"/>
</dbReference>
<dbReference type="Proteomes" id="UP000001030">
    <property type="component" value="Chromosome"/>
</dbReference>
<dbReference type="GO" id="GO:0005737">
    <property type="term" value="C:cytoplasm"/>
    <property type="evidence" value="ECO:0007669"/>
    <property type="project" value="UniProtKB-SubCell"/>
</dbReference>
<dbReference type="GO" id="GO:0000107">
    <property type="term" value="F:imidazoleglycerol-phosphate synthase activity"/>
    <property type="evidence" value="ECO:0007669"/>
    <property type="project" value="UniProtKB-UniRule"/>
</dbReference>
<dbReference type="GO" id="GO:0016829">
    <property type="term" value="F:lyase activity"/>
    <property type="evidence" value="ECO:0007669"/>
    <property type="project" value="UniProtKB-KW"/>
</dbReference>
<dbReference type="GO" id="GO:0000105">
    <property type="term" value="P:L-histidine biosynthetic process"/>
    <property type="evidence" value="ECO:0007669"/>
    <property type="project" value="UniProtKB-UniRule"/>
</dbReference>
<dbReference type="CDD" id="cd04731">
    <property type="entry name" value="HisF"/>
    <property type="match status" value="1"/>
</dbReference>
<dbReference type="FunFam" id="3.20.20.70:FF:000006">
    <property type="entry name" value="Imidazole glycerol phosphate synthase subunit HisF"/>
    <property type="match status" value="1"/>
</dbReference>
<dbReference type="Gene3D" id="3.20.20.70">
    <property type="entry name" value="Aldolase class I"/>
    <property type="match status" value="1"/>
</dbReference>
<dbReference type="HAMAP" id="MF_01013">
    <property type="entry name" value="HisF"/>
    <property type="match status" value="1"/>
</dbReference>
<dbReference type="InterPro" id="IPR013785">
    <property type="entry name" value="Aldolase_TIM"/>
</dbReference>
<dbReference type="InterPro" id="IPR006062">
    <property type="entry name" value="His_biosynth"/>
</dbReference>
<dbReference type="InterPro" id="IPR004651">
    <property type="entry name" value="HisF"/>
</dbReference>
<dbReference type="InterPro" id="IPR050064">
    <property type="entry name" value="IGPS_HisA/HisF"/>
</dbReference>
<dbReference type="InterPro" id="IPR011060">
    <property type="entry name" value="RibuloseP-bd_barrel"/>
</dbReference>
<dbReference type="NCBIfam" id="TIGR00735">
    <property type="entry name" value="hisF"/>
    <property type="match status" value="1"/>
</dbReference>
<dbReference type="PANTHER" id="PTHR21235:SF2">
    <property type="entry name" value="IMIDAZOLE GLYCEROL PHOSPHATE SYNTHASE HISHF"/>
    <property type="match status" value="1"/>
</dbReference>
<dbReference type="PANTHER" id="PTHR21235">
    <property type="entry name" value="IMIDAZOLE GLYCEROL PHOSPHATE SYNTHASE SUBUNIT HISF/H IGP SYNTHASE SUBUNIT HISF/H"/>
    <property type="match status" value="1"/>
</dbReference>
<dbReference type="Pfam" id="PF00977">
    <property type="entry name" value="His_biosynth"/>
    <property type="match status" value="1"/>
</dbReference>
<dbReference type="SUPFAM" id="SSF51366">
    <property type="entry name" value="Ribulose-phoshate binding barrel"/>
    <property type="match status" value="1"/>
</dbReference>
<keyword id="KW-0028">Amino-acid biosynthesis</keyword>
<keyword id="KW-0963">Cytoplasm</keyword>
<keyword id="KW-0368">Histidine biosynthesis</keyword>
<keyword id="KW-0456">Lyase</keyword>
<keyword id="KW-1185">Reference proteome</keyword>
<evidence type="ECO:0000255" key="1">
    <source>
        <dbReference type="HAMAP-Rule" id="MF_01013"/>
    </source>
</evidence>
<gene>
    <name evidence="1" type="primary">hisF</name>
    <name type="ordered locus">SbBS512_E1207</name>
</gene>
<reference key="1">
    <citation type="submission" date="2008-05" db="EMBL/GenBank/DDBJ databases">
        <title>Complete sequence of Shigella boydii serotype 18 strain BS512.</title>
        <authorList>
            <person name="Rasko D.A."/>
            <person name="Rosovitz M."/>
            <person name="Maurelli A.T."/>
            <person name="Myers G."/>
            <person name="Seshadri R."/>
            <person name="Cer R."/>
            <person name="Jiang L."/>
            <person name="Ravel J."/>
            <person name="Sebastian Y."/>
        </authorList>
    </citation>
    <scope>NUCLEOTIDE SEQUENCE [LARGE SCALE GENOMIC DNA]</scope>
    <source>
        <strain>CDC 3083-94 / BS512</strain>
    </source>
</reference>
<name>HIS6_SHIB3</name>
<organism>
    <name type="scientific">Shigella boydii serotype 18 (strain CDC 3083-94 / BS512)</name>
    <dbReference type="NCBI Taxonomy" id="344609"/>
    <lineage>
        <taxon>Bacteria</taxon>
        <taxon>Pseudomonadati</taxon>
        <taxon>Pseudomonadota</taxon>
        <taxon>Gammaproteobacteria</taxon>
        <taxon>Enterobacterales</taxon>
        <taxon>Enterobacteriaceae</taxon>
        <taxon>Shigella</taxon>
    </lineage>
</organism>
<sequence>MLAKRIIPCLDVRDGQVVKGVQFRNHEIIGDIVPLAKRYAEEGADELVFYDITASSDGRVVDKSWVSRVAEVIDIPFCVAGGIKSLDDAAKILSFGADKISINSPALADPTLITRLADRFGVQCIVVGIDTWYDGETGKYHVNQYTGDESRTRVTQWETLDWVQEVQKRGAGEIVLNMMNQDGVRNGYDLEQLKKVREVCHVPLIASGGAGTMEHFLEAFRDADVDGALAASVFHKQIINIGELKAYLATQGVEIRIC</sequence>